<dbReference type="EC" id="4.1.1.-" evidence="3"/>
<dbReference type="EMBL" id="AE000782">
    <property type="protein sequence ID" value="AAB89201.1"/>
    <property type="molecule type" value="Genomic_DNA"/>
</dbReference>
<dbReference type="PIR" id="D69505">
    <property type="entry name" value="D69505"/>
</dbReference>
<dbReference type="RefSeq" id="WP_010879537.1">
    <property type="nucleotide sequence ID" value="NC_000917.1"/>
</dbReference>
<dbReference type="SMR" id="O28234"/>
<dbReference type="STRING" id="224325.AF_2045"/>
<dbReference type="PaxDb" id="224325-AF_2045"/>
<dbReference type="EnsemblBacteria" id="AAB89201">
    <property type="protein sequence ID" value="AAB89201"/>
    <property type="gene ID" value="AF_2045"/>
</dbReference>
<dbReference type="GeneID" id="1485272"/>
<dbReference type="KEGG" id="afu:AF_2045"/>
<dbReference type="eggNOG" id="arCOG04470">
    <property type="taxonomic scope" value="Archaea"/>
</dbReference>
<dbReference type="HOGENOM" id="CLU_072492_1_0_2"/>
<dbReference type="OrthoDB" id="50255at2157"/>
<dbReference type="PhylomeDB" id="O28234"/>
<dbReference type="Proteomes" id="UP000002199">
    <property type="component" value="Chromosome"/>
</dbReference>
<dbReference type="GO" id="GO:0005886">
    <property type="term" value="C:plasma membrane"/>
    <property type="evidence" value="ECO:0007669"/>
    <property type="project" value="UniProtKB-SubCell"/>
</dbReference>
<dbReference type="GO" id="GO:0004609">
    <property type="term" value="F:phosphatidylserine decarboxylase activity"/>
    <property type="evidence" value="ECO:0007669"/>
    <property type="project" value="InterPro"/>
</dbReference>
<dbReference type="GO" id="GO:0008654">
    <property type="term" value="P:phospholipid biosynthetic process"/>
    <property type="evidence" value="ECO:0007669"/>
    <property type="project" value="UniProtKB-UniRule"/>
</dbReference>
<dbReference type="HAMAP" id="MF_00664">
    <property type="entry name" value="PS_decarb_PSD_A"/>
    <property type="match status" value="1"/>
</dbReference>
<dbReference type="InterPro" id="IPR003817">
    <property type="entry name" value="PS_Dcarbxylase"/>
</dbReference>
<dbReference type="InterPro" id="IPR033175">
    <property type="entry name" value="PSD-A"/>
</dbReference>
<dbReference type="NCBIfam" id="TIGR00164">
    <property type="entry name" value="AS_decarb"/>
    <property type="match status" value="1"/>
</dbReference>
<dbReference type="NCBIfam" id="NF003685">
    <property type="entry name" value="PRK05305.2-5"/>
    <property type="match status" value="1"/>
</dbReference>
<dbReference type="PANTHER" id="PTHR35809">
    <property type="entry name" value="ARCHAETIDYLSERINE DECARBOXYLASE PROENZYME-RELATED"/>
    <property type="match status" value="1"/>
</dbReference>
<dbReference type="PANTHER" id="PTHR35809:SF1">
    <property type="entry name" value="ARCHAETIDYLSERINE DECARBOXYLASE PROENZYME-RELATED"/>
    <property type="match status" value="1"/>
</dbReference>
<dbReference type="Pfam" id="PF02666">
    <property type="entry name" value="PS_Dcarbxylase"/>
    <property type="match status" value="1"/>
</dbReference>
<proteinExistence type="evidence at protein level"/>
<accession>O28234</accession>
<sequence>MIERSGYGIIAASLLLSAVAYLLHPLISALFVGFALFTAYFFRDPERKIGEGVVSPADGRIDYLEGRRLEIFMSPFDCHINRAPWGGKVLSVKFIEGSTPPAFIRKSGVRTNEILIETEHGVFRVLQMAGIFARRIVSYVSEGDVVKKGQKIGMIRFGSRVVLEVPEGFRFVRGVGEKVKAGETVALRDESFQGS</sequence>
<comment type="function">
    <text evidence="3 4">Catalyzes the formation of archaetidylethanolamine (PtdEtn) from archaetidylserine (PtdSer).</text>
</comment>
<comment type="catalytic activity">
    <reaction evidence="3 4">
        <text>archaetidylserine + H(+) = archaetidylethanolamine + CO2</text>
        <dbReference type="Rhea" id="RHEA:51488"/>
        <dbReference type="ChEBI" id="CHEBI:15378"/>
        <dbReference type="ChEBI" id="CHEBI:16526"/>
        <dbReference type="ChEBI" id="CHEBI:71517"/>
        <dbReference type="ChEBI" id="CHEBI:134176"/>
    </reaction>
</comment>
<comment type="cofactor">
    <cofactor evidence="3">
        <name>pyruvate</name>
        <dbReference type="ChEBI" id="CHEBI:15361"/>
    </cofactor>
    <text evidence="3">Binds 1 pyruvoyl group covalently per subunit.</text>
</comment>
<comment type="subunit">
    <text evidence="3">Heterodimer of a large membrane-associated beta subunit and a small pyruvoyl-containing alpha subunit.</text>
</comment>
<comment type="subcellular location">
    <subcellularLocation>
        <location evidence="3">Cell membrane</location>
        <topology evidence="3">Peripheral membrane protein</topology>
    </subcellularLocation>
</comment>
<comment type="PTM">
    <text evidence="1 2">Is synthesized initially as an inactive proenzyme. Formation of the active enzyme involves a self-maturation process in which the active site pyruvoyl group is generated from an internal serine residue via an autocatalytic post-translational modification. Two non-identical subunits are generated from the proenzyme in this reaction, and the pyruvate is formed at the N-terminus of the alpha chain, which is derived from the carboxyl end of the proenzyme. The autoendoproteolytic cleavage occurs by a canonical serine protease mechanism, in which the side chain hydroxyl group of the serine supplies its oxygen atom to form the C-terminus of the beta chain, while the remainder of the serine residue undergoes an oxidative deamination to produce ammonia and the pyruvoyl prosthetic group on the alpha chain. During this reaction, the Ser that is part of the protease active site of the proenzyme becomes the pyruvoyl prosthetic group, which constitutes an essential element of the active site of the mature decarboxylase (By similarity).</text>
</comment>
<comment type="PTM">
    <text evidence="3">Is synthesized initially as an inactive proenzyme. Formation of the active enzyme involves a self-maturation process in which the active site pyruvoyl group is generated from an internal serine residue via an autocatalytic post-translational modification. Two non-identical subunits are generated from the proenzyme in this reaction, and the pyruvate is formed at the N-terminus of the alpha chain, which is derived from the carboxyl end of the proenzyme. The post-translation cleavage follows an unusual pathway, termed non-hydrolytic serinolysis, in which the side chain hydroxyl group of the serine supplies its oxygen atom to form the C-terminus of the beta chain, while the remainder of the serine residue undergoes an oxidative deamination to produce ammonia and the pyruvoyl prosthetic group on the alpha chain.</text>
</comment>
<comment type="similarity">
    <text evidence="3 4">Belongs to the phosphatidylserine decarboxylase family. PSD-A subfamily.</text>
</comment>
<feature type="chain" id="PRO_0000029819" description="Archaetidylserine decarboxylase beta chain" evidence="3">
    <location>
        <begin position="1"/>
        <end position="158"/>
    </location>
</feature>
<feature type="chain" id="PRO_0000029820" description="Archaetidylserine decarboxylase alpha chain" evidence="3">
    <location>
        <begin position="159"/>
        <end position="195"/>
    </location>
</feature>
<feature type="active site" description="Schiff-base intermediate with substrate; via pyruvic acid" evidence="3">
    <location>
        <position position="159"/>
    </location>
</feature>
<feature type="site" description="Cleavage (non-hydrolytic); by autocatalysis" evidence="3">
    <location>
        <begin position="158"/>
        <end position="159"/>
    </location>
</feature>
<feature type="modified residue" description="Pyruvic acid (Ser); by autocatalysis" evidence="3">
    <location>
        <position position="159"/>
    </location>
</feature>
<keyword id="KW-1003">Cell membrane</keyword>
<keyword id="KW-0210">Decarboxylase</keyword>
<keyword id="KW-0444">Lipid biosynthesis</keyword>
<keyword id="KW-0443">Lipid metabolism</keyword>
<keyword id="KW-0456">Lyase</keyword>
<keyword id="KW-0472">Membrane</keyword>
<keyword id="KW-0594">Phospholipid biosynthesis</keyword>
<keyword id="KW-1208">Phospholipid metabolism</keyword>
<keyword id="KW-0670">Pyruvate</keyword>
<keyword id="KW-1185">Reference proteome</keyword>
<keyword id="KW-0865">Zymogen</keyword>
<gene>
    <name evidence="3 4" type="primary">asd</name>
    <name type="ordered locus">AF_2045</name>
</gene>
<name>ASD_ARCFU</name>
<evidence type="ECO:0000250" key="1">
    <source>
        <dbReference type="UniProtKB" id="B3L2V1"/>
    </source>
</evidence>
<evidence type="ECO:0000250" key="2">
    <source>
        <dbReference type="UniProtKB" id="P0A8K1"/>
    </source>
</evidence>
<evidence type="ECO:0000255" key="3">
    <source>
        <dbReference type="HAMAP-Rule" id="MF_00664"/>
    </source>
</evidence>
<evidence type="ECO:0000305" key="4">
    <source>
    </source>
</evidence>
<protein>
    <recommendedName>
        <fullName evidence="3 4">Putative archaetidylserine decarboxylase proenzyme</fullName>
        <ecNumber evidence="3">4.1.1.-</ecNumber>
    </recommendedName>
    <component>
        <recommendedName>
            <fullName evidence="3">Archaetidylserine decarboxylase alpha chain</fullName>
        </recommendedName>
    </component>
    <component>
        <recommendedName>
            <fullName evidence="3">Archaetidylserine decarboxylase beta chain</fullName>
        </recommendedName>
    </component>
</protein>
<reference key="1">
    <citation type="journal article" date="1997" name="Nature">
        <title>The complete genome sequence of the hyperthermophilic, sulphate-reducing archaeon Archaeoglobus fulgidus.</title>
        <authorList>
            <person name="Klenk H.-P."/>
            <person name="Clayton R.A."/>
            <person name="Tomb J.-F."/>
            <person name="White O."/>
            <person name="Nelson K.E."/>
            <person name="Ketchum K.A."/>
            <person name="Dodson R.J."/>
            <person name="Gwinn M.L."/>
            <person name="Hickey E.K."/>
            <person name="Peterson J.D."/>
            <person name="Richardson D.L."/>
            <person name="Kerlavage A.R."/>
            <person name="Graham D.E."/>
            <person name="Kyrpides N.C."/>
            <person name="Fleischmann R.D."/>
            <person name="Quackenbush J."/>
            <person name="Lee N.H."/>
            <person name="Sutton G.G."/>
            <person name="Gill S.R."/>
            <person name="Kirkness E.F."/>
            <person name="Dougherty B.A."/>
            <person name="McKenney K."/>
            <person name="Adams M.D."/>
            <person name="Loftus B.J."/>
            <person name="Peterson S.N."/>
            <person name="Reich C.I."/>
            <person name="McNeil L.K."/>
            <person name="Badger J.H."/>
            <person name="Glodek A."/>
            <person name="Zhou L."/>
            <person name="Overbeek R."/>
            <person name="Gocayne J.D."/>
            <person name="Weidman J.F."/>
            <person name="McDonald L.A."/>
            <person name="Utterback T.R."/>
            <person name="Cotton M.D."/>
            <person name="Spriggs T."/>
            <person name="Artiach P."/>
            <person name="Kaine B.P."/>
            <person name="Sykes S.M."/>
            <person name="Sadow P.W."/>
            <person name="D'Andrea K.P."/>
            <person name="Bowman C."/>
            <person name="Fujii C."/>
            <person name="Garland S.A."/>
            <person name="Mason T.M."/>
            <person name="Olsen G.J."/>
            <person name="Fraser C.M."/>
            <person name="Smith H.O."/>
            <person name="Woese C.R."/>
            <person name="Venter J.C."/>
        </authorList>
    </citation>
    <scope>NUCLEOTIDE SEQUENCE [LARGE SCALE GENOMIC DNA]</scope>
    <source>
        <strain>ATCC 49558 / DSM 4304 / JCM 9628 / NBRC 100126 / VC-16</strain>
    </source>
</reference>
<reference key="2">
    <citation type="journal article" date="2005" name="Archaea">
        <title>A study of archaeal enzymes involved in polar lipid synthesis linking amino acid sequence information, genomic contexts and lipid composition.</title>
        <authorList>
            <person name="Daiyasu H."/>
            <person name="Kuma K."/>
            <person name="Yokoi T."/>
            <person name="Morii H."/>
            <person name="Koga Y."/>
            <person name="Toh H."/>
        </authorList>
    </citation>
    <scope>FUNCTION IN ARCHAEAL LIPID BIOSYNTHESIS</scope>
</reference>
<organism>
    <name type="scientific">Archaeoglobus fulgidus (strain ATCC 49558 / DSM 4304 / JCM 9628 / NBRC 100126 / VC-16)</name>
    <dbReference type="NCBI Taxonomy" id="224325"/>
    <lineage>
        <taxon>Archaea</taxon>
        <taxon>Methanobacteriati</taxon>
        <taxon>Methanobacteriota</taxon>
        <taxon>Archaeoglobi</taxon>
        <taxon>Archaeoglobales</taxon>
        <taxon>Archaeoglobaceae</taxon>
        <taxon>Archaeoglobus</taxon>
    </lineage>
</organism>